<organism>
    <name type="scientific">Escherichia coli O17:K52:H18 (strain UMN026 / ExPEC)</name>
    <dbReference type="NCBI Taxonomy" id="585056"/>
    <lineage>
        <taxon>Bacteria</taxon>
        <taxon>Pseudomonadati</taxon>
        <taxon>Pseudomonadota</taxon>
        <taxon>Gammaproteobacteria</taxon>
        <taxon>Enterobacterales</taxon>
        <taxon>Enterobacteriaceae</taxon>
        <taxon>Escherichia</taxon>
    </lineage>
</organism>
<sequence>MAGNTIGQLFRVTTFGESHGLALGCIVDGVPPGIPLTEADLQHDLDRRRPGTSRYTTQRREPDQVKILSGVFEGVTTGTSIGLLIENTDQRSQDYSAIKDVFRPGHADYTYEQKYGLRDYRGGGRSSARETAMRVAAGAIAKKYLAEKFGIEIRGCLTQMGDIPLEIKDWSQVEQNPFFCPDPDKIDALDELMRALKKEGDSIGAKVTVVASGVPAGLGEPVFDRLDADIAHALMSINAVKGVEIGDGFDVVALRGSQNRDEITKDGFQSNHAGGILGGISSGQQIIAHMALKPTSSITVPGRTINRFGEEVEMITKGRHDPCVGIRAVPIAEAMLAIVLMDHLLRQRAQNADVKTDIPRW</sequence>
<gene>
    <name evidence="1" type="primary">aroC</name>
    <name type="ordered locus">ECUMN_2669</name>
</gene>
<name>AROC_ECOLU</name>
<comment type="function">
    <text evidence="1">Catalyzes the anti-1,4-elimination of the C-3 phosphate and the C-6 proR hydrogen from 5-enolpyruvylshikimate-3-phosphate (EPSP) to yield chorismate, which is the branch point compound that serves as the starting substrate for the three terminal pathways of aromatic amino acid biosynthesis. This reaction introduces a second double bond into the aromatic ring system.</text>
</comment>
<comment type="catalytic activity">
    <reaction evidence="1">
        <text>5-O-(1-carboxyvinyl)-3-phosphoshikimate = chorismate + phosphate</text>
        <dbReference type="Rhea" id="RHEA:21020"/>
        <dbReference type="ChEBI" id="CHEBI:29748"/>
        <dbReference type="ChEBI" id="CHEBI:43474"/>
        <dbReference type="ChEBI" id="CHEBI:57701"/>
        <dbReference type="EC" id="4.2.3.5"/>
    </reaction>
</comment>
<comment type="cofactor">
    <cofactor evidence="1">
        <name>FMNH2</name>
        <dbReference type="ChEBI" id="CHEBI:57618"/>
    </cofactor>
    <text evidence="1">Reduced FMN (FMNH(2)).</text>
</comment>
<comment type="pathway">
    <text evidence="1">Metabolic intermediate biosynthesis; chorismate biosynthesis; chorismate from D-erythrose 4-phosphate and phosphoenolpyruvate: step 7/7.</text>
</comment>
<comment type="subunit">
    <text evidence="1">Homotetramer.</text>
</comment>
<comment type="similarity">
    <text evidence="1">Belongs to the chorismate synthase family.</text>
</comment>
<feature type="chain" id="PRO_1000119492" description="Chorismate synthase">
    <location>
        <begin position="1"/>
        <end position="361"/>
    </location>
</feature>
<feature type="binding site" evidence="1">
    <location>
        <position position="48"/>
    </location>
    <ligand>
        <name>NADP(+)</name>
        <dbReference type="ChEBI" id="CHEBI:58349"/>
    </ligand>
</feature>
<feature type="binding site" evidence="1">
    <location>
        <position position="54"/>
    </location>
    <ligand>
        <name>NADP(+)</name>
        <dbReference type="ChEBI" id="CHEBI:58349"/>
    </ligand>
</feature>
<feature type="binding site" evidence="1">
    <location>
        <begin position="125"/>
        <end position="127"/>
    </location>
    <ligand>
        <name>FMN</name>
        <dbReference type="ChEBI" id="CHEBI:58210"/>
    </ligand>
</feature>
<feature type="binding site" evidence="1">
    <location>
        <begin position="238"/>
        <end position="239"/>
    </location>
    <ligand>
        <name>FMN</name>
        <dbReference type="ChEBI" id="CHEBI:58210"/>
    </ligand>
</feature>
<feature type="binding site" evidence="1">
    <location>
        <position position="278"/>
    </location>
    <ligand>
        <name>FMN</name>
        <dbReference type="ChEBI" id="CHEBI:58210"/>
    </ligand>
</feature>
<feature type="binding site" evidence="1">
    <location>
        <begin position="293"/>
        <end position="297"/>
    </location>
    <ligand>
        <name>FMN</name>
        <dbReference type="ChEBI" id="CHEBI:58210"/>
    </ligand>
</feature>
<feature type="binding site" evidence="1">
    <location>
        <position position="319"/>
    </location>
    <ligand>
        <name>FMN</name>
        <dbReference type="ChEBI" id="CHEBI:58210"/>
    </ligand>
</feature>
<reference key="1">
    <citation type="journal article" date="2009" name="PLoS Genet.">
        <title>Organised genome dynamics in the Escherichia coli species results in highly diverse adaptive paths.</title>
        <authorList>
            <person name="Touchon M."/>
            <person name="Hoede C."/>
            <person name="Tenaillon O."/>
            <person name="Barbe V."/>
            <person name="Baeriswyl S."/>
            <person name="Bidet P."/>
            <person name="Bingen E."/>
            <person name="Bonacorsi S."/>
            <person name="Bouchier C."/>
            <person name="Bouvet O."/>
            <person name="Calteau A."/>
            <person name="Chiapello H."/>
            <person name="Clermont O."/>
            <person name="Cruveiller S."/>
            <person name="Danchin A."/>
            <person name="Diard M."/>
            <person name="Dossat C."/>
            <person name="Karoui M.E."/>
            <person name="Frapy E."/>
            <person name="Garry L."/>
            <person name="Ghigo J.M."/>
            <person name="Gilles A.M."/>
            <person name="Johnson J."/>
            <person name="Le Bouguenec C."/>
            <person name="Lescat M."/>
            <person name="Mangenot S."/>
            <person name="Martinez-Jehanne V."/>
            <person name="Matic I."/>
            <person name="Nassif X."/>
            <person name="Oztas S."/>
            <person name="Petit M.A."/>
            <person name="Pichon C."/>
            <person name="Rouy Z."/>
            <person name="Ruf C.S."/>
            <person name="Schneider D."/>
            <person name="Tourret J."/>
            <person name="Vacherie B."/>
            <person name="Vallenet D."/>
            <person name="Medigue C."/>
            <person name="Rocha E.P.C."/>
            <person name="Denamur E."/>
        </authorList>
    </citation>
    <scope>NUCLEOTIDE SEQUENCE [LARGE SCALE GENOMIC DNA]</scope>
    <source>
        <strain>UMN026 / ExPEC</strain>
    </source>
</reference>
<accession>B7N5U1</accession>
<protein>
    <recommendedName>
        <fullName evidence="1">Chorismate synthase</fullName>
        <shortName evidence="1">CS</shortName>
        <ecNumber evidence="1">4.2.3.5</ecNumber>
    </recommendedName>
    <alternativeName>
        <fullName evidence="1">5-enolpyruvylshikimate-3-phosphate phospholyase</fullName>
    </alternativeName>
</protein>
<evidence type="ECO:0000255" key="1">
    <source>
        <dbReference type="HAMAP-Rule" id="MF_00300"/>
    </source>
</evidence>
<dbReference type="EC" id="4.2.3.5" evidence="1"/>
<dbReference type="EMBL" id="CU928163">
    <property type="protein sequence ID" value="CAR13850.1"/>
    <property type="molecule type" value="Genomic_DNA"/>
</dbReference>
<dbReference type="RefSeq" id="WP_001297933.1">
    <property type="nucleotide sequence ID" value="NC_011751.1"/>
</dbReference>
<dbReference type="RefSeq" id="YP_002413378.1">
    <property type="nucleotide sequence ID" value="NC_011751.1"/>
</dbReference>
<dbReference type="SMR" id="B7N5U1"/>
<dbReference type="STRING" id="585056.ECUMN_2669"/>
<dbReference type="KEGG" id="eum:ECUMN_2669"/>
<dbReference type="PATRIC" id="fig|585056.7.peg.2852"/>
<dbReference type="HOGENOM" id="CLU_034547_0_2_6"/>
<dbReference type="UniPathway" id="UPA00053">
    <property type="reaction ID" value="UER00090"/>
</dbReference>
<dbReference type="Proteomes" id="UP000007097">
    <property type="component" value="Chromosome"/>
</dbReference>
<dbReference type="GO" id="GO:0005829">
    <property type="term" value="C:cytosol"/>
    <property type="evidence" value="ECO:0007669"/>
    <property type="project" value="TreeGrafter"/>
</dbReference>
<dbReference type="GO" id="GO:0004107">
    <property type="term" value="F:chorismate synthase activity"/>
    <property type="evidence" value="ECO:0007669"/>
    <property type="project" value="UniProtKB-UniRule"/>
</dbReference>
<dbReference type="GO" id="GO:0010181">
    <property type="term" value="F:FMN binding"/>
    <property type="evidence" value="ECO:0007669"/>
    <property type="project" value="TreeGrafter"/>
</dbReference>
<dbReference type="GO" id="GO:0008652">
    <property type="term" value="P:amino acid biosynthetic process"/>
    <property type="evidence" value="ECO:0007669"/>
    <property type="project" value="UniProtKB-KW"/>
</dbReference>
<dbReference type="GO" id="GO:0009073">
    <property type="term" value="P:aromatic amino acid family biosynthetic process"/>
    <property type="evidence" value="ECO:0007669"/>
    <property type="project" value="UniProtKB-KW"/>
</dbReference>
<dbReference type="GO" id="GO:0009423">
    <property type="term" value="P:chorismate biosynthetic process"/>
    <property type="evidence" value="ECO:0007669"/>
    <property type="project" value="UniProtKB-UniRule"/>
</dbReference>
<dbReference type="CDD" id="cd07304">
    <property type="entry name" value="Chorismate_synthase"/>
    <property type="match status" value="1"/>
</dbReference>
<dbReference type="FunFam" id="3.60.150.10:FF:000001">
    <property type="entry name" value="Chorismate synthase"/>
    <property type="match status" value="1"/>
</dbReference>
<dbReference type="Gene3D" id="3.60.150.10">
    <property type="entry name" value="Chorismate synthase AroC"/>
    <property type="match status" value="1"/>
</dbReference>
<dbReference type="HAMAP" id="MF_00300">
    <property type="entry name" value="Chorismate_synth"/>
    <property type="match status" value="1"/>
</dbReference>
<dbReference type="InterPro" id="IPR000453">
    <property type="entry name" value="Chorismate_synth"/>
</dbReference>
<dbReference type="InterPro" id="IPR035904">
    <property type="entry name" value="Chorismate_synth_AroC_sf"/>
</dbReference>
<dbReference type="InterPro" id="IPR020541">
    <property type="entry name" value="Chorismate_synthase_CS"/>
</dbReference>
<dbReference type="NCBIfam" id="TIGR00033">
    <property type="entry name" value="aroC"/>
    <property type="match status" value="1"/>
</dbReference>
<dbReference type="NCBIfam" id="NF003793">
    <property type="entry name" value="PRK05382.1"/>
    <property type="match status" value="1"/>
</dbReference>
<dbReference type="PANTHER" id="PTHR21085">
    <property type="entry name" value="CHORISMATE SYNTHASE"/>
    <property type="match status" value="1"/>
</dbReference>
<dbReference type="PANTHER" id="PTHR21085:SF0">
    <property type="entry name" value="CHORISMATE SYNTHASE"/>
    <property type="match status" value="1"/>
</dbReference>
<dbReference type="Pfam" id="PF01264">
    <property type="entry name" value="Chorismate_synt"/>
    <property type="match status" value="1"/>
</dbReference>
<dbReference type="PIRSF" id="PIRSF001456">
    <property type="entry name" value="Chorismate_synth"/>
    <property type="match status" value="1"/>
</dbReference>
<dbReference type="SUPFAM" id="SSF103263">
    <property type="entry name" value="Chorismate synthase, AroC"/>
    <property type="match status" value="1"/>
</dbReference>
<dbReference type="PROSITE" id="PS00787">
    <property type="entry name" value="CHORISMATE_SYNTHASE_1"/>
    <property type="match status" value="1"/>
</dbReference>
<dbReference type="PROSITE" id="PS00788">
    <property type="entry name" value="CHORISMATE_SYNTHASE_2"/>
    <property type="match status" value="1"/>
</dbReference>
<dbReference type="PROSITE" id="PS00789">
    <property type="entry name" value="CHORISMATE_SYNTHASE_3"/>
    <property type="match status" value="1"/>
</dbReference>
<keyword id="KW-0028">Amino-acid biosynthesis</keyword>
<keyword id="KW-0057">Aromatic amino acid biosynthesis</keyword>
<keyword id="KW-0274">FAD</keyword>
<keyword id="KW-0285">Flavoprotein</keyword>
<keyword id="KW-0288">FMN</keyword>
<keyword id="KW-0456">Lyase</keyword>
<keyword id="KW-0521">NADP</keyword>
<proteinExistence type="inferred from homology"/>